<name>YR525_MIMIV</name>
<reference key="1">
    <citation type="journal article" date="2004" name="Science">
        <title>The 1.2-megabase genome sequence of Mimivirus.</title>
        <authorList>
            <person name="Raoult D."/>
            <person name="Audic S."/>
            <person name="Robert C."/>
            <person name="Abergel C."/>
            <person name="Renesto P."/>
            <person name="Ogata H."/>
            <person name="La Scola B."/>
            <person name="Susan M."/>
            <person name="Claverie J.-M."/>
        </authorList>
    </citation>
    <scope>NUCLEOTIDE SEQUENCE [LARGE SCALE GENOMIC DNA]</scope>
    <source>
        <strain>Rowbotham-Bradford</strain>
    </source>
</reference>
<proteinExistence type="predicted"/>
<sequence>MSRNKRSVKKRDIIEDILNEHQEEFTKEFVDIYKNFEKNLDKNFDSRFKLKINKAIDQPIFQKNSKSEYPGEYELPSILKFSDEPLIKKTKNKKINESVSKPSKCEIKPLLNPRSKSIYPFGSTKIRKQCHNHSEKMLINLSEDSISKPIVIPITSPPKKKSVIDNSIPINVAVKVPINNMEEPFTESEKDFISKCIVESPLITDNKITLPKLIPNEIIQESKIIQEPRIIPIETTQTIFPQMSQEIVSKESQNSQKSQEFQKISLNEAQEIPIKLDRNINSAICDNYTIDNADQNINPQSDGCIYRESLNSTSENLSDIEIITSNMSDTKINESDIKTSGIYNVISSNSMSESNNYGLQNSFSSGYSVEPSNKLINSSLKIIDDLKTETNPLIPKEKDYEWEELTVEDINTSFKVIGDLKEGAKLKVVDGSYLAEDKAYLSSFARYTGGQGRDRIMSFLDHLFNETKRNHEKLILEIRNDNDVDNKIPELRDLFSNMIIFLHRYDVMRNVYKSDTGTHAKLGVIRNKFFTFKESFFKDLCVPR</sequence>
<gene>
    <name type="ordered locus">MIMI_R525</name>
</gene>
<organism>
    <name type="scientific">Acanthamoeba polyphaga mimivirus</name>
    <name type="common">APMV</name>
    <dbReference type="NCBI Taxonomy" id="212035"/>
    <lineage>
        <taxon>Viruses</taxon>
        <taxon>Varidnaviria</taxon>
        <taxon>Bamfordvirae</taxon>
        <taxon>Nucleocytoviricota</taxon>
        <taxon>Megaviricetes</taxon>
        <taxon>Imitervirales</taxon>
        <taxon>Mimiviridae</taxon>
        <taxon>Megamimivirinae</taxon>
        <taxon>Mimivirus</taxon>
        <taxon>Mimivirus bradfordmassiliense</taxon>
    </lineage>
</organism>
<accession>Q5UQ84</accession>
<feature type="chain" id="PRO_0000253442" description="Uncharacterized protein R525">
    <location>
        <begin position="1"/>
        <end position="544"/>
    </location>
</feature>
<dbReference type="EMBL" id="AY653733">
    <property type="protein sequence ID" value="AAV50789.1"/>
    <property type="molecule type" value="Genomic_DNA"/>
</dbReference>
<dbReference type="SMR" id="Q5UQ84"/>
<dbReference type="KEGG" id="vg:9925158"/>
<dbReference type="Proteomes" id="UP000001134">
    <property type="component" value="Genome"/>
</dbReference>
<keyword id="KW-1185">Reference proteome</keyword>
<organismHost>
    <name type="scientific">Acanthamoeba polyphaga</name>
    <name type="common">Amoeba</name>
    <dbReference type="NCBI Taxonomy" id="5757"/>
</organismHost>
<protein>
    <recommendedName>
        <fullName>Uncharacterized protein R525</fullName>
    </recommendedName>
</protein>